<accession>Q8XCG3</accession>
<organism>
    <name type="scientific">Escherichia coli O157:H7</name>
    <dbReference type="NCBI Taxonomy" id="83334"/>
    <lineage>
        <taxon>Bacteria</taxon>
        <taxon>Pseudomonadati</taxon>
        <taxon>Pseudomonadota</taxon>
        <taxon>Gammaproteobacteria</taxon>
        <taxon>Enterobacterales</taxon>
        <taxon>Enterobacteriaceae</taxon>
        <taxon>Escherichia</taxon>
    </lineage>
</organism>
<comment type="function">
    <text evidence="1">Has an important function as a repair enzyme for proteins that have been inactivated by oxidation. Catalyzes the reversible oxidation-reduction of methionine sulfoxide in proteins to methionine (By similarity).</text>
</comment>
<comment type="catalytic activity">
    <reaction>
        <text>L-methionyl-[protein] + [thioredoxin]-disulfide + H2O = L-methionyl-(S)-S-oxide-[protein] + [thioredoxin]-dithiol</text>
        <dbReference type="Rhea" id="RHEA:14217"/>
        <dbReference type="Rhea" id="RHEA-COMP:10698"/>
        <dbReference type="Rhea" id="RHEA-COMP:10700"/>
        <dbReference type="Rhea" id="RHEA-COMP:12313"/>
        <dbReference type="Rhea" id="RHEA-COMP:12315"/>
        <dbReference type="ChEBI" id="CHEBI:15377"/>
        <dbReference type="ChEBI" id="CHEBI:16044"/>
        <dbReference type="ChEBI" id="CHEBI:29950"/>
        <dbReference type="ChEBI" id="CHEBI:44120"/>
        <dbReference type="ChEBI" id="CHEBI:50058"/>
        <dbReference type="EC" id="1.8.4.11"/>
    </reaction>
</comment>
<comment type="catalytic activity">
    <reaction>
        <text>[thioredoxin]-disulfide + L-methionine + H2O = L-methionine (S)-S-oxide + [thioredoxin]-dithiol</text>
        <dbReference type="Rhea" id="RHEA:19993"/>
        <dbReference type="Rhea" id="RHEA-COMP:10698"/>
        <dbReference type="Rhea" id="RHEA-COMP:10700"/>
        <dbReference type="ChEBI" id="CHEBI:15377"/>
        <dbReference type="ChEBI" id="CHEBI:29950"/>
        <dbReference type="ChEBI" id="CHEBI:50058"/>
        <dbReference type="ChEBI" id="CHEBI:57844"/>
        <dbReference type="ChEBI" id="CHEBI:58772"/>
        <dbReference type="EC" id="1.8.4.11"/>
    </reaction>
</comment>
<comment type="similarity">
    <text evidence="2">Belongs to the MsrA Met sulfoxide reductase family.</text>
</comment>
<keyword id="KW-1015">Disulfide bond</keyword>
<keyword id="KW-0560">Oxidoreductase</keyword>
<keyword id="KW-0676">Redox-active center</keyword>
<keyword id="KW-1185">Reference proteome</keyword>
<proteinExistence type="inferred from homology"/>
<sequence length="212" mass="23355">MSLFDKKHLVSPADALPGRNTPMPVATLHAVNGHSMTNVPDGMEIAIFAMGCFWGVERLFWQLHGVYSTAAGYTGGYTPNPTYREVCSGDTGHAEAVRIVYDPSVISYEQLLQVFWENHDPAQGMRQGNDHGTQYRSAIYPLTPEQDAAARASLERFQAAMLAADDDRHITTEIANATPFYYAEDDHQQYLHKNPYGYCGIGGIGVCLPPEA</sequence>
<name>MSRA_ECO57</name>
<feature type="initiator methionine" description="Removed" evidence="1">
    <location>
        <position position="1"/>
    </location>
</feature>
<feature type="chain" id="PRO_0000138547" description="Peptide methionine sulfoxide reductase MsrA">
    <location>
        <begin position="2"/>
        <end position="212"/>
    </location>
</feature>
<feature type="active site" description="Cysteine sulfenic acid (-SOH) intermediate" evidence="1">
    <location>
        <position position="52"/>
    </location>
</feature>
<feature type="disulfide bond" description="Redox-active; alternate" evidence="1">
    <location>
        <begin position="52"/>
        <end position="199"/>
    </location>
</feature>
<feature type="disulfide bond" description="Redox-active; alternate" evidence="1">
    <location>
        <begin position="199"/>
        <end position="207"/>
    </location>
</feature>
<gene>
    <name type="primary">msrA</name>
    <name type="ordered locus">Z5830</name>
    <name type="ordered locus">ECs5197</name>
</gene>
<evidence type="ECO:0000250" key="1"/>
<evidence type="ECO:0000305" key="2"/>
<reference key="1">
    <citation type="journal article" date="2001" name="Nature">
        <title>Genome sequence of enterohaemorrhagic Escherichia coli O157:H7.</title>
        <authorList>
            <person name="Perna N.T."/>
            <person name="Plunkett G. III"/>
            <person name="Burland V."/>
            <person name="Mau B."/>
            <person name="Glasner J.D."/>
            <person name="Rose D.J."/>
            <person name="Mayhew G.F."/>
            <person name="Evans P.S."/>
            <person name="Gregor J."/>
            <person name="Kirkpatrick H.A."/>
            <person name="Posfai G."/>
            <person name="Hackett J."/>
            <person name="Klink S."/>
            <person name="Boutin A."/>
            <person name="Shao Y."/>
            <person name="Miller L."/>
            <person name="Grotbeck E.J."/>
            <person name="Davis N.W."/>
            <person name="Lim A."/>
            <person name="Dimalanta E.T."/>
            <person name="Potamousis K."/>
            <person name="Apodaca J."/>
            <person name="Anantharaman T.S."/>
            <person name="Lin J."/>
            <person name="Yen G."/>
            <person name="Schwartz D.C."/>
            <person name="Welch R.A."/>
            <person name="Blattner F.R."/>
        </authorList>
    </citation>
    <scope>NUCLEOTIDE SEQUENCE [LARGE SCALE GENOMIC DNA]</scope>
    <source>
        <strain>O157:H7 / EDL933 / ATCC 700927 / EHEC</strain>
    </source>
</reference>
<reference key="2">
    <citation type="journal article" date="2001" name="DNA Res.">
        <title>Complete genome sequence of enterohemorrhagic Escherichia coli O157:H7 and genomic comparison with a laboratory strain K-12.</title>
        <authorList>
            <person name="Hayashi T."/>
            <person name="Makino K."/>
            <person name="Ohnishi M."/>
            <person name="Kurokawa K."/>
            <person name="Ishii K."/>
            <person name="Yokoyama K."/>
            <person name="Han C.-G."/>
            <person name="Ohtsubo E."/>
            <person name="Nakayama K."/>
            <person name="Murata T."/>
            <person name="Tanaka M."/>
            <person name="Tobe T."/>
            <person name="Iida T."/>
            <person name="Takami H."/>
            <person name="Honda T."/>
            <person name="Sasakawa C."/>
            <person name="Ogasawara N."/>
            <person name="Yasunaga T."/>
            <person name="Kuhara S."/>
            <person name="Shiba T."/>
            <person name="Hattori M."/>
            <person name="Shinagawa H."/>
        </authorList>
    </citation>
    <scope>NUCLEOTIDE SEQUENCE [LARGE SCALE GENOMIC DNA]</scope>
    <source>
        <strain>O157:H7 / Sakai / RIMD 0509952 / EHEC</strain>
    </source>
</reference>
<protein>
    <recommendedName>
        <fullName>Peptide methionine sulfoxide reductase MsrA</fullName>
        <shortName>Protein-methionine-S-oxide reductase</shortName>
        <ecNumber>1.8.4.11</ecNumber>
    </recommendedName>
    <alternativeName>
        <fullName>Peptide-methionine (S)-S-oxide reductase</fullName>
        <shortName>Peptide Met(O) reductase</shortName>
    </alternativeName>
</protein>
<dbReference type="EC" id="1.8.4.11"/>
<dbReference type="EMBL" id="AE005174">
    <property type="protein sequence ID" value="AAG59417.1"/>
    <property type="molecule type" value="Genomic_DNA"/>
</dbReference>
<dbReference type="EMBL" id="BA000007">
    <property type="protein sequence ID" value="BAB38620.1"/>
    <property type="molecule type" value="Genomic_DNA"/>
</dbReference>
<dbReference type="PIR" id="E86119">
    <property type="entry name" value="E86119"/>
</dbReference>
<dbReference type="PIR" id="E91278">
    <property type="entry name" value="E91278"/>
</dbReference>
<dbReference type="RefSeq" id="NP_313224.1">
    <property type="nucleotide sequence ID" value="NC_002695.1"/>
</dbReference>
<dbReference type="RefSeq" id="WP_001301936.1">
    <property type="nucleotide sequence ID" value="NZ_VOAI01000023.1"/>
</dbReference>
<dbReference type="SMR" id="Q8XCG3"/>
<dbReference type="STRING" id="155864.Z5830"/>
<dbReference type="GeneID" id="913935"/>
<dbReference type="KEGG" id="ece:Z5830"/>
<dbReference type="KEGG" id="ecs:ECs_5197"/>
<dbReference type="PATRIC" id="fig|386585.9.peg.5433"/>
<dbReference type="eggNOG" id="COG0225">
    <property type="taxonomic scope" value="Bacteria"/>
</dbReference>
<dbReference type="HOGENOM" id="CLU_031040_10_3_6"/>
<dbReference type="OMA" id="LFWESHD"/>
<dbReference type="Proteomes" id="UP000000558">
    <property type="component" value="Chromosome"/>
</dbReference>
<dbReference type="Proteomes" id="UP000002519">
    <property type="component" value="Chromosome"/>
</dbReference>
<dbReference type="GO" id="GO:0005737">
    <property type="term" value="C:cytoplasm"/>
    <property type="evidence" value="ECO:0007669"/>
    <property type="project" value="TreeGrafter"/>
</dbReference>
<dbReference type="GO" id="GO:0036456">
    <property type="term" value="F:L-methionine-(S)-S-oxide reductase activity"/>
    <property type="evidence" value="ECO:0007669"/>
    <property type="project" value="TreeGrafter"/>
</dbReference>
<dbReference type="GO" id="GO:0008113">
    <property type="term" value="F:peptide-methionine (S)-S-oxide reductase activity"/>
    <property type="evidence" value="ECO:0007669"/>
    <property type="project" value="UniProtKB-UniRule"/>
</dbReference>
<dbReference type="GO" id="GO:0034599">
    <property type="term" value="P:cellular response to oxidative stress"/>
    <property type="evidence" value="ECO:0007669"/>
    <property type="project" value="TreeGrafter"/>
</dbReference>
<dbReference type="GO" id="GO:0036211">
    <property type="term" value="P:protein modification process"/>
    <property type="evidence" value="ECO:0007669"/>
    <property type="project" value="UniProtKB-UniRule"/>
</dbReference>
<dbReference type="FunFam" id="3.30.1060.10:FF:000001">
    <property type="entry name" value="Peptide methionine sulfoxide reductase MsrA"/>
    <property type="match status" value="1"/>
</dbReference>
<dbReference type="Gene3D" id="3.30.1060.10">
    <property type="entry name" value="Peptide methionine sulphoxide reductase MsrA"/>
    <property type="match status" value="1"/>
</dbReference>
<dbReference type="HAMAP" id="MF_01401">
    <property type="entry name" value="MsrA"/>
    <property type="match status" value="1"/>
</dbReference>
<dbReference type="InterPro" id="IPR002569">
    <property type="entry name" value="Met_Sox_Rdtase_MsrA_dom"/>
</dbReference>
<dbReference type="InterPro" id="IPR036509">
    <property type="entry name" value="Met_Sox_Rdtase_MsrA_sf"/>
</dbReference>
<dbReference type="InterPro" id="IPR050162">
    <property type="entry name" value="MsrA_MetSO_reductase"/>
</dbReference>
<dbReference type="NCBIfam" id="TIGR00401">
    <property type="entry name" value="msrA"/>
    <property type="match status" value="1"/>
</dbReference>
<dbReference type="PANTHER" id="PTHR42799">
    <property type="entry name" value="MITOCHONDRIAL PEPTIDE METHIONINE SULFOXIDE REDUCTASE"/>
    <property type="match status" value="1"/>
</dbReference>
<dbReference type="PANTHER" id="PTHR42799:SF2">
    <property type="entry name" value="MITOCHONDRIAL PEPTIDE METHIONINE SULFOXIDE REDUCTASE"/>
    <property type="match status" value="1"/>
</dbReference>
<dbReference type="Pfam" id="PF01625">
    <property type="entry name" value="PMSR"/>
    <property type="match status" value="1"/>
</dbReference>
<dbReference type="SUPFAM" id="SSF55068">
    <property type="entry name" value="Peptide methionine sulfoxide reductase"/>
    <property type="match status" value="1"/>
</dbReference>